<sequence length="506" mass="54099">MARLALLSVSNKTGLIDLARRLVEEFEFDLISSGGTAQALKDAGLPVTKVADYTGSPEILGGRVKTLHPRIHGGILARRDVPSDLTDLENNQIRPIDLVVVNLYPFEETIAKPGVTLAEAVEQIDIGGPAMLRASSKNFAHLTVLCDPAQYDEYLQELRQNNGVASLEFRQKAALKGFLHTASYDSAIASYLSGTQQHTLNGTELQSLRYGENPHQPAAWYQTGTTPTGWTAAKKLQGKELSYNNLVDLEAARRIIAEFTDTPAATIIKHTNPCGTALADTIVEAYQKAFNADATSAFGGIVALNRPIDAATASELTKTFLECVVAPDCDAEAQKILAKKSNVRVLTLADLSTGPKTLVKQIAGGFLVQAADDIAADTIQWQVVTERQPTADELAELLFAWKVCKHVKSNAIVVTSDRTTLGVGAGQMNRIGSTKIALEQAGDKAKGAILASDGFFPFDDTVRTAAAAGISAIVQPGGSLRDQDSVKAANELGLLMVLTGVRHFLH</sequence>
<proteinExistence type="inferred from homology"/>
<evidence type="ECO:0000255" key="1">
    <source>
        <dbReference type="HAMAP-Rule" id="MF_00139"/>
    </source>
</evidence>
<evidence type="ECO:0000255" key="2">
    <source>
        <dbReference type="PROSITE-ProRule" id="PRU01202"/>
    </source>
</evidence>
<accession>Q3M6G3</accession>
<comment type="catalytic activity">
    <reaction evidence="1">
        <text>(6R)-10-formyltetrahydrofolate + 5-amino-1-(5-phospho-beta-D-ribosyl)imidazole-4-carboxamide = 5-formamido-1-(5-phospho-D-ribosyl)imidazole-4-carboxamide + (6S)-5,6,7,8-tetrahydrofolate</text>
        <dbReference type="Rhea" id="RHEA:22192"/>
        <dbReference type="ChEBI" id="CHEBI:57453"/>
        <dbReference type="ChEBI" id="CHEBI:58467"/>
        <dbReference type="ChEBI" id="CHEBI:58475"/>
        <dbReference type="ChEBI" id="CHEBI:195366"/>
        <dbReference type="EC" id="2.1.2.3"/>
    </reaction>
</comment>
<comment type="catalytic activity">
    <reaction evidence="1">
        <text>IMP + H2O = 5-formamido-1-(5-phospho-D-ribosyl)imidazole-4-carboxamide</text>
        <dbReference type="Rhea" id="RHEA:18445"/>
        <dbReference type="ChEBI" id="CHEBI:15377"/>
        <dbReference type="ChEBI" id="CHEBI:58053"/>
        <dbReference type="ChEBI" id="CHEBI:58467"/>
        <dbReference type="EC" id="3.5.4.10"/>
    </reaction>
</comment>
<comment type="pathway">
    <text evidence="1">Purine metabolism; IMP biosynthesis via de novo pathway; 5-formamido-1-(5-phospho-D-ribosyl)imidazole-4-carboxamide from 5-amino-1-(5-phospho-D-ribosyl)imidazole-4-carboxamide (10-formyl THF route): step 1/1.</text>
</comment>
<comment type="pathway">
    <text evidence="1">Purine metabolism; IMP biosynthesis via de novo pathway; IMP from 5-formamido-1-(5-phospho-D-ribosyl)imidazole-4-carboxamide: step 1/1.</text>
</comment>
<comment type="domain">
    <text evidence="1">The IMP cyclohydrolase activity resides in the N-terminal region.</text>
</comment>
<comment type="similarity">
    <text evidence="1">Belongs to the PurH family.</text>
</comment>
<keyword id="KW-0378">Hydrolase</keyword>
<keyword id="KW-0511">Multifunctional enzyme</keyword>
<keyword id="KW-0658">Purine biosynthesis</keyword>
<keyword id="KW-0808">Transferase</keyword>
<dbReference type="EC" id="2.1.2.3" evidence="1"/>
<dbReference type="EC" id="3.5.4.10" evidence="1"/>
<dbReference type="EMBL" id="CP000117">
    <property type="protein sequence ID" value="ABA23423.1"/>
    <property type="molecule type" value="Genomic_DNA"/>
</dbReference>
<dbReference type="SMR" id="Q3M6G3"/>
<dbReference type="STRING" id="240292.Ava_3818"/>
<dbReference type="KEGG" id="ava:Ava_3818"/>
<dbReference type="eggNOG" id="COG0138">
    <property type="taxonomic scope" value="Bacteria"/>
</dbReference>
<dbReference type="HOGENOM" id="CLU_016316_5_2_3"/>
<dbReference type="UniPathway" id="UPA00074">
    <property type="reaction ID" value="UER00133"/>
</dbReference>
<dbReference type="UniPathway" id="UPA00074">
    <property type="reaction ID" value="UER00135"/>
</dbReference>
<dbReference type="Proteomes" id="UP000002533">
    <property type="component" value="Chromosome"/>
</dbReference>
<dbReference type="GO" id="GO:0005829">
    <property type="term" value="C:cytosol"/>
    <property type="evidence" value="ECO:0007669"/>
    <property type="project" value="TreeGrafter"/>
</dbReference>
<dbReference type="GO" id="GO:0003937">
    <property type="term" value="F:IMP cyclohydrolase activity"/>
    <property type="evidence" value="ECO:0007669"/>
    <property type="project" value="UniProtKB-UniRule"/>
</dbReference>
<dbReference type="GO" id="GO:0004643">
    <property type="term" value="F:phosphoribosylaminoimidazolecarboxamide formyltransferase activity"/>
    <property type="evidence" value="ECO:0007669"/>
    <property type="project" value="UniProtKB-UniRule"/>
</dbReference>
<dbReference type="GO" id="GO:0006189">
    <property type="term" value="P:'de novo' IMP biosynthetic process"/>
    <property type="evidence" value="ECO:0007669"/>
    <property type="project" value="UniProtKB-UniRule"/>
</dbReference>
<dbReference type="CDD" id="cd01421">
    <property type="entry name" value="IMPCH"/>
    <property type="match status" value="1"/>
</dbReference>
<dbReference type="FunFam" id="3.40.140.20:FF:000001">
    <property type="entry name" value="Bifunctional purine biosynthesis protein PurH"/>
    <property type="match status" value="1"/>
</dbReference>
<dbReference type="FunFam" id="3.40.50.1380:FF:000001">
    <property type="entry name" value="Bifunctional purine biosynthesis protein PurH"/>
    <property type="match status" value="1"/>
</dbReference>
<dbReference type="Gene3D" id="3.40.140.20">
    <property type="match status" value="2"/>
</dbReference>
<dbReference type="Gene3D" id="3.40.50.1380">
    <property type="entry name" value="Methylglyoxal synthase-like domain"/>
    <property type="match status" value="1"/>
</dbReference>
<dbReference type="HAMAP" id="MF_00139">
    <property type="entry name" value="PurH"/>
    <property type="match status" value="1"/>
</dbReference>
<dbReference type="InterPro" id="IPR024051">
    <property type="entry name" value="AICAR_Tfase_dup_dom_sf"/>
</dbReference>
<dbReference type="InterPro" id="IPR016193">
    <property type="entry name" value="Cytidine_deaminase-like"/>
</dbReference>
<dbReference type="InterPro" id="IPR011607">
    <property type="entry name" value="MGS-like_dom"/>
</dbReference>
<dbReference type="InterPro" id="IPR036914">
    <property type="entry name" value="MGS-like_dom_sf"/>
</dbReference>
<dbReference type="InterPro" id="IPR002695">
    <property type="entry name" value="PurH-like"/>
</dbReference>
<dbReference type="NCBIfam" id="NF002049">
    <property type="entry name" value="PRK00881.1"/>
    <property type="match status" value="1"/>
</dbReference>
<dbReference type="NCBIfam" id="TIGR00355">
    <property type="entry name" value="purH"/>
    <property type="match status" value="1"/>
</dbReference>
<dbReference type="PANTHER" id="PTHR11692:SF0">
    <property type="entry name" value="BIFUNCTIONAL PURINE BIOSYNTHESIS PROTEIN ATIC"/>
    <property type="match status" value="1"/>
</dbReference>
<dbReference type="PANTHER" id="PTHR11692">
    <property type="entry name" value="BIFUNCTIONAL PURINE BIOSYNTHESIS PROTEIN PURH"/>
    <property type="match status" value="1"/>
</dbReference>
<dbReference type="Pfam" id="PF01808">
    <property type="entry name" value="AICARFT_IMPCHas"/>
    <property type="match status" value="1"/>
</dbReference>
<dbReference type="Pfam" id="PF02142">
    <property type="entry name" value="MGS"/>
    <property type="match status" value="1"/>
</dbReference>
<dbReference type="PIRSF" id="PIRSF000414">
    <property type="entry name" value="AICARFT_IMPCHas"/>
    <property type="match status" value="1"/>
</dbReference>
<dbReference type="SMART" id="SM00798">
    <property type="entry name" value="AICARFT_IMPCHas"/>
    <property type="match status" value="1"/>
</dbReference>
<dbReference type="SMART" id="SM00851">
    <property type="entry name" value="MGS"/>
    <property type="match status" value="1"/>
</dbReference>
<dbReference type="SUPFAM" id="SSF53927">
    <property type="entry name" value="Cytidine deaminase-like"/>
    <property type="match status" value="1"/>
</dbReference>
<dbReference type="SUPFAM" id="SSF52335">
    <property type="entry name" value="Methylglyoxal synthase-like"/>
    <property type="match status" value="1"/>
</dbReference>
<dbReference type="PROSITE" id="PS51855">
    <property type="entry name" value="MGS"/>
    <property type="match status" value="1"/>
</dbReference>
<reference key="1">
    <citation type="journal article" date="2014" name="Stand. Genomic Sci.">
        <title>Complete genome sequence of Anabaena variabilis ATCC 29413.</title>
        <authorList>
            <person name="Thiel T."/>
            <person name="Pratte B.S."/>
            <person name="Zhong J."/>
            <person name="Goodwin L."/>
            <person name="Copeland A."/>
            <person name="Lucas S."/>
            <person name="Han C."/>
            <person name="Pitluck S."/>
            <person name="Land M.L."/>
            <person name="Kyrpides N.C."/>
            <person name="Woyke T."/>
        </authorList>
    </citation>
    <scope>NUCLEOTIDE SEQUENCE [LARGE SCALE GENOMIC DNA]</scope>
    <source>
        <strain>ATCC 29413 / PCC 7937</strain>
    </source>
</reference>
<organism>
    <name type="scientific">Trichormus variabilis (strain ATCC 29413 / PCC 7937)</name>
    <name type="common">Anabaena variabilis</name>
    <dbReference type="NCBI Taxonomy" id="240292"/>
    <lineage>
        <taxon>Bacteria</taxon>
        <taxon>Bacillati</taxon>
        <taxon>Cyanobacteriota</taxon>
        <taxon>Cyanophyceae</taxon>
        <taxon>Nostocales</taxon>
        <taxon>Nostocaceae</taxon>
        <taxon>Trichormus</taxon>
    </lineage>
</organism>
<protein>
    <recommendedName>
        <fullName evidence="1">Bifunctional purine biosynthesis protein PurH</fullName>
    </recommendedName>
    <domain>
        <recommendedName>
            <fullName evidence="1">Phosphoribosylaminoimidazolecarboxamide formyltransferase</fullName>
            <ecNumber evidence="1">2.1.2.3</ecNumber>
        </recommendedName>
        <alternativeName>
            <fullName evidence="1">AICAR transformylase</fullName>
        </alternativeName>
    </domain>
    <domain>
        <recommendedName>
            <fullName evidence="1">IMP cyclohydrolase</fullName>
            <ecNumber evidence="1">3.5.4.10</ecNumber>
        </recommendedName>
        <alternativeName>
            <fullName evidence="1">ATIC</fullName>
        </alternativeName>
        <alternativeName>
            <fullName evidence="1">IMP synthase</fullName>
        </alternativeName>
        <alternativeName>
            <fullName evidence="1">Inosinicase</fullName>
        </alternativeName>
    </domain>
</protein>
<feature type="chain" id="PRO_1000018836" description="Bifunctional purine biosynthesis protein PurH">
    <location>
        <begin position="1"/>
        <end position="506"/>
    </location>
</feature>
<feature type="domain" description="MGS-like" evidence="2">
    <location>
        <begin position="1"/>
        <end position="146"/>
    </location>
</feature>
<name>PUR9_TRIV2</name>
<gene>
    <name evidence="1" type="primary">purH</name>
    <name type="ordered locus">Ava_3818</name>
</gene>